<reference key="1">
    <citation type="submission" date="2006-09" db="EMBL/GenBank/DDBJ databases">
        <title>Complete sequence of chromosome 1 of Shewanella sp. ANA-3.</title>
        <authorList>
            <person name="Copeland A."/>
            <person name="Lucas S."/>
            <person name="Lapidus A."/>
            <person name="Barry K."/>
            <person name="Detter J.C."/>
            <person name="Glavina del Rio T."/>
            <person name="Hammon N."/>
            <person name="Israni S."/>
            <person name="Dalin E."/>
            <person name="Tice H."/>
            <person name="Pitluck S."/>
            <person name="Chertkov O."/>
            <person name="Brettin T."/>
            <person name="Bruce D."/>
            <person name="Han C."/>
            <person name="Tapia R."/>
            <person name="Gilna P."/>
            <person name="Schmutz J."/>
            <person name="Larimer F."/>
            <person name="Land M."/>
            <person name="Hauser L."/>
            <person name="Kyrpides N."/>
            <person name="Kim E."/>
            <person name="Newman D."/>
            <person name="Salticov C."/>
            <person name="Konstantinidis K."/>
            <person name="Klappenback J."/>
            <person name="Tiedje J."/>
            <person name="Richardson P."/>
        </authorList>
    </citation>
    <scope>NUCLEOTIDE SEQUENCE [LARGE SCALE GENOMIC DNA]</scope>
    <source>
        <strain>ANA-3</strain>
    </source>
</reference>
<evidence type="ECO:0000255" key="1">
    <source>
        <dbReference type="HAMAP-Rule" id="MF_00185"/>
    </source>
</evidence>
<dbReference type="EC" id="2.5.1.75" evidence="1"/>
<dbReference type="EMBL" id="CP000469">
    <property type="protein sequence ID" value="ABK46835.1"/>
    <property type="molecule type" value="Genomic_DNA"/>
</dbReference>
<dbReference type="SMR" id="A0KSR6"/>
<dbReference type="STRING" id="94122.Shewana3_0596"/>
<dbReference type="KEGG" id="shn:Shewana3_0596"/>
<dbReference type="eggNOG" id="COG0324">
    <property type="taxonomic scope" value="Bacteria"/>
</dbReference>
<dbReference type="HOGENOM" id="CLU_032616_0_0_6"/>
<dbReference type="Proteomes" id="UP000002589">
    <property type="component" value="Chromosome"/>
</dbReference>
<dbReference type="GO" id="GO:0005524">
    <property type="term" value="F:ATP binding"/>
    <property type="evidence" value="ECO:0007669"/>
    <property type="project" value="UniProtKB-UniRule"/>
</dbReference>
<dbReference type="GO" id="GO:0052381">
    <property type="term" value="F:tRNA dimethylallyltransferase activity"/>
    <property type="evidence" value="ECO:0007669"/>
    <property type="project" value="UniProtKB-UniRule"/>
</dbReference>
<dbReference type="GO" id="GO:0006400">
    <property type="term" value="P:tRNA modification"/>
    <property type="evidence" value="ECO:0007669"/>
    <property type="project" value="TreeGrafter"/>
</dbReference>
<dbReference type="FunFam" id="1.10.20.140:FF:000001">
    <property type="entry name" value="tRNA dimethylallyltransferase"/>
    <property type="match status" value="1"/>
</dbReference>
<dbReference type="Gene3D" id="1.10.20.140">
    <property type="match status" value="1"/>
</dbReference>
<dbReference type="Gene3D" id="3.40.50.300">
    <property type="entry name" value="P-loop containing nucleotide triphosphate hydrolases"/>
    <property type="match status" value="1"/>
</dbReference>
<dbReference type="HAMAP" id="MF_00185">
    <property type="entry name" value="IPP_trans"/>
    <property type="match status" value="1"/>
</dbReference>
<dbReference type="InterPro" id="IPR039657">
    <property type="entry name" value="Dimethylallyltransferase"/>
</dbReference>
<dbReference type="InterPro" id="IPR018022">
    <property type="entry name" value="IPT"/>
</dbReference>
<dbReference type="InterPro" id="IPR027417">
    <property type="entry name" value="P-loop_NTPase"/>
</dbReference>
<dbReference type="NCBIfam" id="TIGR00174">
    <property type="entry name" value="miaA"/>
    <property type="match status" value="1"/>
</dbReference>
<dbReference type="PANTHER" id="PTHR11088">
    <property type="entry name" value="TRNA DIMETHYLALLYLTRANSFERASE"/>
    <property type="match status" value="1"/>
</dbReference>
<dbReference type="PANTHER" id="PTHR11088:SF60">
    <property type="entry name" value="TRNA DIMETHYLALLYLTRANSFERASE"/>
    <property type="match status" value="1"/>
</dbReference>
<dbReference type="Pfam" id="PF01715">
    <property type="entry name" value="IPPT"/>
    <property type="match status" value="1"/>
</dbReference>
<dbReference type="SUPFAM" id="SSF52540">
    <property type="entry name" value="P-loop containing nucleoside triphosphate hydrolases"/>
    <property type="match status" value="1"/>
</dbReference>
<keyword id="KW-0067">ATP-binding</keyword>
<keyword id="KW-0460">Magnesium</keyword>
<keyword id="KW-0547">Nucleotide-binding</keyword>
<keyword id="KW-0808">Transferase</keyword>
<keyword id="KW-0819">tRNA processing</keyword>
<gene>
    <name evidence="1" type="primary">miaA</name>
    <name type="ordered locus">Shewana3_0596</name>
</gene>
<comment type="function">
    <text evidence="1">Catalyzes the transfer of a dimethylallyl group onto the adenine at position 37 in tRNAs that read codons beginning with uridine, leading to the formation of N6-(dimethylallyl)adenosine (i(6)A).</text>
</comment>
<comment type="catalytic activity">
    <reaction evidence="1">
        <text>adenosine(37) in tRNA + dimethylallyl diphosphate = N(6)-dimethylallyladenosine(37) in tRNA + diphosphate</text>
        <dbReference type="Rhea" id="RHEA:26482"/>
        <dbReference type="Rhea" id="RHEA-COMP:10162"/>
        <dbReference type="Rhea" id="RHEA-COMP:10375"/>
        <dbReference type="ChEBI" id="CHEBI:33019"/>
        <dbReference type="ChEBI" id="CHEBI:57623"/>
        <dbReference type="ChEBI" id="CHEBI:74411"/>
        <dbReference type="ChEBI" id="CHEBI:74415"/>
        <dbReference type="EC" id="2.5.1.75"/>
    </reaction>
</comment>
<comment type="cofactor">
    <cofactor evidence="1">
        <name>Mg(2+)</name>
        <dbReference type="ChEBI" id="CHEBI:18420"/>
    </cofactor>
</comment>
<comment type="subunit">
    <text evidence="1">Monomer.</text>
</comment>
<comment type="similarity">
    <text evidence="1">Belongs to the IPP transferase family.</text>
</comment>
<organism>
    <name type="scientific">Shewanella sp. (strain ANA-3)</name>
    <dbReference type="NCBI Taxonomy" id="94122"/>
    <lineage>
        <taxon>Bacteria</taxon>
        <taxon>Pseudomonadati</taxon>
        <taxon>Pseudomonadota</taxon>
        <taxon>Gammaproteobacteria</taxon>
        <taxon>Alteromonadales</taxon>
        <taxon>Shewanellaceae</taxon>
        <taxon>Shewanella</taxon>
    </lineage>
</organism>
<name>MIAA_SHESA</name>
<sequence>MGPTASGKTALALELAEKHNCEIISVDSALIYRGMDIGSAKPSAEELARGPHRLIDIRDPAESYSAADFRADALREIEQIISMGKTPVLVGGTMMYFKALLEGLSPLPSADEAIRAEIQAEADANGWEALHEQLREIDPVSAERIHPNDPQRLSRAIEVYRISGKSLTELTQTKSAPLPYDVVQFAIAPRERKVLHELIGQRFRIMLEQGFIDEVAQLKARGDLHLDLPSMRCVGYRQCWQYLDGEFDYDTMVEKAVAATRQLAKRQLTWLRSWPELNWLESGAEGNLVTLMRQCR</sequence>
<proteinExistence type="inferred from homology"/>
<protein>
    <recommendedName>
        <fullName evidence="1">tRNA dimethylallyltransferase</fullName>
        <ecNumber evidence="1">2.5.1.75</ecNumber>
    </recommendedName>
    <alternativeName>
        <fullName evidence="1">Dimethylallyl diphosphate:tRNA dimethylallyltransferase</fullName>
        <shortName evidence="1">DMAPP:tRNA dimethylallyltransferase</shortName>
        <shortName evidence="1">DMATase</shortName>
    </alternativeName>
    <alternativeName>
        <fullName evidence="1">Isopentenyl-diphosphate:tRNA isopentenyltransferase</fullName>
        <shortName evidence="1">IPP transferase</shortName>
        <shortName evidence="1">IPPT</shortName>
        <shortName evidence="1">IPTase</shortName>
    </alternativeName>
</protein>
<feature type="chain" id="PRO_0000377318" description="tRNA dimethylallyltransferase">
    <location>
        <begin position="1"/>
        <end position="296"/>
    </location>
</feature>
<feature type="region of interest" description="Interaction with substrate tRNA" evidence="1">
    <location>
        <begin position="27"/>
        <end position="30"/>
    </location>
</feature>
<feature type="region of interest" description="Interaction with substrate tRNA" evidence="1">
    <location>
        <begin position="151"/>
        <end position="155"/>
    </location>
</feature>
<feature type="region of interest" description="Interaction with substrate tRNA" evidence="1">
    <location>
        <begin position="232"/>
        <end position="237"/>
    </location>
</feature>
<feature type="binding site" evidence="1">
    <location>
        <begin position="2"/>
        <end position="9"/>
    </location>
    <ligand>
        <name>ATP</name>
        <dbReference type="ChEBI" id="CHEBI:30616"/>
    </ligand>
</feature>
<feature type="binding site" evidence="1">
    <location>
        <begin position="4"/>
        <end position="9"/>
    </location>
    <ligand>
        <name>substrate</name>
    </ligand>
</feature>
<feature type="site" description="Interaction with substrate tRNA" evidence="1">
    <location>
        <position position="93"/>
    </location>
</feature>
<feature type="site" description="Interaction with substrate tRNA" evidence="1">
    <location>
        <position position="115"/>
    </location>
</feature>
<accession>A0KSR6</accession>